<gene>
    <name type="ordered locus">SSO0255</name>
</gene>
<feature type="chain" id="PRO_0000135005" description="Nicotinamide-nucleotide adenylyltransferase">
    <location>
        <begin position="1"/>
        <end position="172"/>
    </location>
</feature>
<feature type="sequence conflict" description="In Ref. 2; AA sequence." evidence="1" ref="2">
    <location>
        <position position="2"/>
    </location>
</feature>
<feature type="sequence conflict" description="In Ref. 2; AA sequence." evidence="1" ref="2">
    <original>WS</original>
    <variation>IK</variation>
    <location>
        <begin position="23"/>
        <end position="24"/>
    </location>
</feature>
<feature type="sequence conflict" description="In Ref. 2; AA sequence." evidence="1" ref="2">
    <original>EL</original>
    <variation>PP</variation>
    <location>
        <begin position="30"/>
        <end position="31"/>
    </location>
</feature>
<keyword id="KW-0067">ATP-binding</keyword>
<keyword id="KW-0963">Cytoplasm</keyword>
<keyword id="KW-0903">Direct protein sequencing</keyword>
<keyword id="KW-0520">NAD</keyword>
<keyword id="KW-0547">Nucleotide-binding</keyword>
<keyword id="KW-0548">Nucleotidyltransferase</keyword>
<keyword id="KW-0662">Pyridine nucleotide biosynthesis</keyword>
<keyword id="KW-1185">Reference proteome</keyword>
<keyword id="KW-0808">Transferase</keyword>
<proteinExistence type="evidence at protein level"/>
<sequence length="172" mass="20096">MSRGLYPGRFQPFHLGHLNVIKWSLERVDELIILVGSSQESHTVTNPFTAGERVEMIRNSLKDVGMDLSRIYIIPMPDILMNNIWAHYVSTYTPKFEVVFARNPLVVRIFKEAGYKVEIPPAFNREKYNSTYIRRLIILNDNWSELVPKPVYKYILEIKGDQRLREIVGTDK</sequence>
<comment type="catalytic activity">
    <reaction>
        <text>beta-nicotinamide D-ribonucleotide + ATP + H(+) = diphosphate + NAD(+)</text>
        <dbReference type="Rhea" id="RHEA:21360"/>
        <dbReference type="ChEBI" id="CHEBI:14649"/>
        <dbReference type="ChEBI" id="CHEBI:15378"/>
        <dbReference type="ChEBI" id="CHEBI:30616"/>
        <dbReference type="ChEBI" id="CHEBI:33019"/>
        <dbReference type="ChEBI" id="CHEBI:57540"/>
        <dbReference type="EC" id="2.7.7.1"/>
    </reaction>
</comment>
<comment type="pathway">
    <text>Cofactor biosynthesis; NAD(+) biosynthesis; NAD(+) from nicotinamide D-ribonucleotide: step 1/1.</text>
</comment>
<comment type="subcellular location">
    <subcellularLocation>
        <location>Cytoplasm</location>
    </subcellularLocation>
</comment>
<comment type="similarity">
    <text evidence="1">Belongs to the archaeal NMN adenylyltransferase family.</text>
</comment>
<comment type="sequence caution" evidence="1">
    <conflict type="erroneous initiation">
        <sequence resource="EMBL-CDS" id="AAK40594"/>
    </conflict>
</comment>
<evidence type="ECO:0000305" key="1"/>
<name>NADM_SACS2</name>
<protein>
    <recommendedName>
        <fullName>Nicotinamide-nucleotide adenylyltransferase</fullName>
        <ecNumber>2.7.7.1</ecNumber>
    </recommendedName>
    <alternativeName>
        <fullName>NAD(+) diphosphorylase</fullName>
    </alternativeName>
    <alternativeName>
        <fullName>NAD(+) pyrophosphorylase</fullName>
    </alternativeName>
    <alternativeName>
        <fullName>NMN adenylyltransferase</fullName>
    </alternativeName>
</protein>
<accession>P57084</accession>
<dbReference type="EC" id="2.7.7.1"/>
<dbReference type="EMBL" id="AE006641">
    <property type="protein sequence ID" value="AAK40594.1"/>
    <property type="status" value="ALT_INIT"/>
    <property type="molecule type" value="Genomic_DNA"/>
</dbReference>
<dbReference type="PIR" id="C90167">
    <property type="entry name" value="C90167"/>
</dbReference>
<dbReference type="RefSeq" id="WP_014511516.1">
    <property type="nucleotide sequence ID" value="NC_002754.1"/>
</dbReference>
<dbReference type="SMR" id="P57084"/>
<dbReference type="FunCoup" id="P57084">
    <property type="interactions" value="8"/>
</dbReference>
<dbReference type="STRING" id="273057.SSO0255"/>
<dbReference type="PaxDb" id="273057-SSO0255"/>
<dbReference type="EnsemblBacteria" id="AAK40594">
    <property type="protein sequence ID" value="AAK40594"/>
    <property type="gene ID" value="SSO0255"/>
</dbReference>
<dbReference type="KEGG" id="sso:SSO0255"/>
<dbReference type="PATRIC" id="fig|273057.12.peg.249"/>
<dbReference type="eggNOG" id="arCOG00972">
    <property type="taxonomic scope" value="Archaea"/>
</dbReference>
<dbReference type="HOGENOM" id="CLU_108783_0_0_2"/>
<dbReference type="InParanoid" id="P57084"/>
<dbReference type="PhylomeDB" id="P57084"/>
<dbReference type="BioCyc" id="MetaCyc:MONOMER-12229"/>
<dbReference type="BRENDA" id="2.7.7.1">
    <property type="organism ID" value="6163"/>
</dbReference>
<dbReference type="UniPathway" id="UPA00253">
    <property type="reaction ID" value="UER00600"/>
</dbReference>
<dbReference type="Proteomes" id="UP000001974">
    <property type="component" value="Chromosome"/>
</dbReference>
<dbReference type="GO" id="GO:0005737">
    <property type="term" value="C:cytoplasm"/>
    <property type="evidence" value="ECO:0007669"/>
    <property type="project" value="UniProtKB-SubCell"/>
</dbReference>
<dbReference type="GO" id="GO:0005524">
    <property type="term" value="F:ATP binding"/>
    <property type="evidence" value="ECO:0007669"/>
    <property type="project" value="UniProtKB-KW"/>
</dbReference>
<dbReference type="GO" id="GO:0000309">
    <property type="term" value="F:nicotinamide-nucleotide adenylyltransferase activity"/>
    <property type="evidence" value="ECO:0007669"/>
    <property type="project" value="UniProtKB-UniRule"/>
</dbReference>
<dbReference type="GO" id="GO:0009435">
    <property type="term" value="P:NAD biosynthetic process"/>
    <property type="evidence" value="ECO:0007669"/>
    <property type="project" value="UniProtKB-UniRule"/>
</dbReference>
<dbReference type="CDD" id="cd02166">
    <property type="entry name" value="NMNAT_Archaea"/>
    <property type="match status" value="1"/>
</dbReference>
<dbReference type="Gene3D" id="3.40.50.620">
    <property type="entry name" value="HUPs"/>
    <property type="match status" value="1"/>
</dbReference>
<dbReference type="HAMAP" id="MF_00243">
    <property type="entry name" value="NMN_adenylyltr"/>
    <property type="match status" value="1"/>
</dbReference>
<dbReference type="InterPro" id="IPR004821">
    <property type="entry name" value="Cyt_trans-like"/>
</dbReference>
<dbReference type="InterPro" id="IPR006418">
    <property type="entry name" value="NMN_Atrans_arc"/>
</dbReference>
<dbReference type="InterPro" id="IPR014729">
    <property type="entry name" value="Rossmann-like_a/b/a_fold"/>
</dbReference>
<dbReference type="NCBIfam" id="TIGR01527">
    <property type="entry name" value="arch_NMN_Atrans"/>
    <property type="match status" value="1"/>
</dbReference>
<dbReference type="NCBIfam" id="TIGR00125">
    <property type="entry name" value="cyt_tran_rel"/>
    <property type="match status" value="1"/>
</dbReference>
<dbReference type="NCBIfam" id="NF002243">
    <property type="entry name" value="PRK01153.1"/>
    <property type="match status" value="1"/>
</dbReference>
<dbReference type="PANTHER" id="PTHR21342:SF0">
    <property type="entry name" value="BIFUNCTIONAL NMN ADENYLYLTRANSFERASE_NUDIX HYDROLASE"/>
    <property type="match status" value="1"/>
</dbReference>
<dbReference type="PANTHER" id="PTHR21342">
    <property type="entry name" value="PHOSPHOPANTETHEINE ADENYLYLTRANSFERASE"/>
    <property type="match status" value="1"/>
</dbReference>
<dbReference type="Pfam" id="PF01467">
    <property type="entry name" value="CTP_transf_like"/>
    <property type="match status" value="1"/>
</dbReference>
<dbReference type="SUPFAM" id="SSF52374">
    <property type="entry name" value="Nucleotidylyl transferase"/>
    <property type="match status" value="1"/>
</dbReference>
<organism>
    <name type="scientific">Saccharolobus solfataricus (strain ATCC 35092 / DSM 1617 / JCM 11322 / P2)</name>
    <name type="common">Sulfolobus solfataricus</name>
    <dbReference type="NCBI Taxonomy" id="273057"/>
    <lineage>
        <taxon>Archaea</taxon>
        <taxon>Thermoproteota</taxon>
        <taxon>Thermoprotei</taxon>
        <taxon>Sulfolobales</taxon>
        <taxon>Sulfolobaceae</taxon>
        <taxon>Saccharolobus</taxon>
    </lineage>
</organism>
<reference key="1">
    <citation type="journal article" date="2001" name="Proc. Natl. Acad. Sci. U.S.A.">
        <title>The complete genome of the crenarchaeon Sulfolobus solfataricus P2.</title>
        <authorList>
            <person name="She Q."/>
            <person name="Singh R.K."/>
            <person name="Confalonieri F."/>
            <person name="Zivanovic Y."/>
            <person name="Allard G."/>
            <person name="Awayez M.J."/>
            <person name="Chan-Weiher C.C.-Y."/>
            <person name="Clausen I.G."/>
            <person name="Curtis B.A."/>
            <person name="De Moors A."/>
            <person name="Erauso G."/>
            <person name="Fletcher C."/>
            <person name="Gordon P.M.K."/>
            <person name="Heikamp-de Jong I."/>
            <person name="Jeffries A.C."/>
            <person name="Kozera C.J."/>
            <person name="Medina N."/>
            <person name="Peng X."/>
            <person name="Thi-Ngoc H.P."/>
            <person name="Redder P."/>
            <person name="Schenk M.E."/>
            <person name="Theriault C."/>
            <person name="Tolstrup N."/>
            <person name="Charlebois R.L."/>
            <person name="Doolittle W.F."/>
            <person name="Duguet M."/>
            <person name="Gaasterland T."/>
            <person name="Garrett R.A."/>
            <person name="Ragan M.A."/>
            <person name="Sensen C.W."/>
            <person name="Van der Oost J."/>
        </authorList>
    </citation>
    <scope>NUCLEOTIDE SEQUENCE [LARGE SCALE GENOMIC DNA]</scope>
    <source>
        <strain>ATCC 35092 / DSM 1617 / JCM 11322 / P2</strain>
    </source>
</reference>
<reference key="2">
    <citation type="journal article" date="1997" name="J. Bacteriol.">
        <title>Characterization of nicotinamide mononucleotide adenylyltransferase from thermophilic archaea.</title>
        <authorList>
            <person name="Raffaelli N."/>
            <person name="Pisani F.M."/>
            <person name="Lorenzi T."/>
            <person name="Emanuelli M."/>
            <person name="Amici A."/>
            <person name="Ruggieri S."/>
            <person name="Magni G."/>
        </authorList>
    </citation>
    <scope>PROTEIN SEQUENCE OF 1-33</scope>
    <scope>CHARACTERIZATION</scope>
    <source>
        <strain>DSM 5833 / MT-4</strain>
    </source>
</reference>